<accession>Q652Q1</accession>
<accession>A0A0N7KRA7</accession>
<name>GL91_ORYSJ</name>
<evidence type="ECO:0000250" key="1"/>
<evidence type="ECO:0000255" key="2"/>
<evidence type="ECO:0000305" key="3"/>
<proteinExistence type="evidence at transcript level"/>
<sequence>MMMSSRSSVSLGVLLLLAVILSAGAADPDILTDFVVPSDTDPSGIDGAFFTYKNLVTGNSGDPAKLTVTKATHAEFPALLGQSVSYAALVFGAGTVNPPHIHPRASELLVVVQGPLLVGLVDAARNGTVYTQTLQTGDMFVFPKGMVHFQFNNGTDVVARAFSAFGSATPGTISLPAALFGSGIDDTILDKSMHTDQATVDQLKQDQAPPSPRPSPGSSSSAAAALLPSRWAITLLLCFAASYYFYF</sequence>
<protein>
    <recommendedName>
        <fullName>Germin-like protein 9-1</fullName>
    </recommendedName>
</protein>
<comment type="function">
    <text>May play a role in plant defense. Probably has no oxalate oxidase activity even if the active site is conserved.</text>
</comment>
<comment type="subunit">
    <text evidence="1">Oligomer (believed to be a pentamer but probably hexamer).</text>
</comment>
<comment type="subcellular location">
    <subcellularLocation>
        <location evidence="1">Secreted</location>
        <location evidence="1">Extracellular space</location>
        <location evidence="1">Apoplast</location>
    </subcellularLocation>
</comment>
<comment type="similarity">
    <text evidence="3">Belongs to the germin family.</text>
</comment>
<feature type="signal peptide" evidence="2">
    <location>
        <begin position="1"/>
        <end position="25"/>
    </location>
</feature>
<feature type="chain" id="PRO_0000365527" description="Germin-like protein 9-1">
    <location>
        <begin position="26"/>
        <end position="247"/>
    </location>
</feature>
<feature type="domain" description="Cupin type-1" evidence="2">
    <location>
        <begin position="53"/>
        <end position="201"/>
    </location>
</feature>
<feature type="binding site" evidence="1">
    <location>
        <position position="100"/>
    </location>
    <ligand>
        <name>Mn(2+)</name>
        <dbReference type="ChEBI" id="CHEBI:29035"/>
    </ligand>
</feature>
<feature type="binding site" evidence="1">
    <location>
        <position position="102"/>
    </location>
    <ligand>
        <name>Mn(2+)</name>
        <dbReference type="ChEBI" id="CHEBI:29035"/>
    </ligand>
</feature>
<feature type="binding site" evidence="1">
    <location>
        <position position="107"/>
    </location>
    <ligand>
        <name>Mn(2+)</name>
        <dbReference type="ChEBI" id="CHEBI:29035"/>
    </ligand>
</feature>
<feature type="binding site" evidence="1">
    <location>
        <position position="148"/>
    </location>
    <ligand>
        <name>Mn(2+)</name>
        <dbReference type="ChEBI" id="CHEBI:29035"/>
    </ligand>
</feature>
<feature type="glycosylation site" description="N-linked (GlcNAc...) asparagine" evidence="2">
    <location>
        <position position="126"/>
    </location>
</feature>
<feature type="glycosylation site" description="N-linked (GlcNAc...) asparagine" evidence="2">
    <location>
        <position position="153"/>
    </location>
</feature>
<keyword id="KW-0052">Apoplast</keyword>
<keyword id="KW-0325">Glycoprotein</keyword>
<keyword id="KW-0464">Manganese</keyword>
<keyword id="KW-0479">Metal-binding</keyword>
<keyword id="KW-1185">Reference proteome</keyword>
<keyword id="KW-0964">Secreted</keyword>
<keyword id="KW-0732">Signal</keyword>
<dbReference type="EMBL" id="AP005546">
    <property type="protein sequence ID" value="BAD46216.1"/>
    <property type="molecule type" value="Genomic_DNA"/>
</dbReference>
<dbReference type="EMBL" id="AP008215">
    <property type="protein sequence ID" value="BAF25885.1"/>
    <property type="molecule type" value="Genomic_DNA"/>
</dbReference>
<dbReference type="EMBL" id="AP014965">
    <property type="protein sequence ID" value="BAT09490.1"/>
    <property type="molecule type" value="Genomic_DNA"/>
</dbReference>
<dbReference type="EMBL" id="CM000146">
    <property type="protein sequence ID" value="EAZ45724.1"/>
    <property type="molecule type" value="Genomic_DNA"/>
</dbReference>
<dbReference type="EMBL" id="AK108987">
    <property type="protein sequence ID" value="BAG98579.1"/>
    <property type="molecule type" value="mRNA"/>
</dbReference>
<dbReference type="RefSeq" id="XP_015611452.1">
    <property type="nucleotide sequence ID" value="XM_015755966.1"/>
</dbReference>
<dbReference type="SMR" id="Q652Q1"/>
<dbReference type="FunCoup" id="Q652Q1">
    <property type="interactions" value="41"/>
</dbReference>
<dbReference type="STRING" id="39947.Q652Q1"/>
<dbReference type="PaxDb" id="39947-Q652Q1"/>
<dbReference type="EnsemblPlants" id="Os09t0568500-01">
    <property type="protein sequence ID" value="Os09t0568500-01"/>
    <property type="gene ID" value="Os09g0568500"/>
</dbReference>
<dbReference type="Gramene" id="Os09t0568500-01">
    <property type="protein sequence ID" value="Os09t0568500-01"/>
    <property type="gene ID" value="Os09g0568500"/>
</dbReference>
<dbReference type="KEGG" id="dosa:Os09g0568500"/>
<dbReference type="eggNOG" id="ENOG502QYH0">
    <property type="taxonomic scope" value="Eukaryota"/>
</dbReference>
<dbReference type="HOGENOM" id="CLU_015790_0_3_1"/>
<dbReference type="InParanoid" id="Q652Q1"/>
<dbReference type="OMA" id="EHMARAF"/>
<dbReference type="OrthoDB" id="1546383at2759"/>
<dbReference type="Proteomes" id="UP000000763">
    <property type="component" value="Chromosome 9"/>
</dbReference>
<dbReference type="Proteomes" id="UP000007752">
    <property type="component" value="Chromosome 9"/>
</dbReference>
<dbReference type="Proteomes" id="UP000059680">
    <property type="component" value="Chromosome 9"/>
</dbReference>
<dbReference type="GO" id="GO:0048046">
    <property type="term" value="C:apoplast"/>
    <property type="evidence" value="ECO:0007669"/>
    <property type="project" value="UniProtKB-SubCell"/>
</dbReference>
<dbReference type="GO" id="GO:0030145">
    <property type="term" value="F:manganese ion binding"/>
    <property type="evidence" value="ECO:0007669"/>
    <property type="project" value="InterPro"/>
</dbReference>
<dbReference type="CDD" id="cd02241">
    <property type="entry name" value="cupin_OxOx"/>
    <property type="match status" value="1"/>
</dbReference>
<dbReference type="FunFam" id="2.60.120.10:FF:000098">
    <property type="entry name" value="Germin-like protein 9-3"/>
    <property type="match status" value="1"/>
</dbReference>
<dbReference type="Gene3D" id="2.60.120.10">
    <property type="entry name" value="Jelly Rolls"/>
    <property type="match status" value="1"/>
</dbReference>
<dbReference type="InterPro" id="IPR006045">
    <property type="entry name" value="Cupin_1"/>
</dbReference>
<dbReference type="InterPro" id="IPR001929">
    <property type="entry name" value="Germin"/>
</dbReference>
<dbReference type="InterPro" id="IPR014710">
    <property type="entry name" value="RmlC-like_jellyroll"/>
</dbReference>
<dbReference type="InterPro" id="IPR011051">
    <property type="entry name" value="RmlC_Cupin_sf"/>
</dbReference>
<dbReference type="PANTHER" id="PTHR31238">
    <property type="entry name" value="GERMIN-LIKE PROTEIN SUBFAMILY 3 MEMBER 3"/>
    <property type="match status" value="1"/>
</dbReference>
<dbReference type="Pfam" id="PF00190">
    <property type="entry name" value="Cupin_1"/>
    <property type="match status" value="1"/>
</dbReference>
<dbReference type="PRINTS" id="PR00325">
    <property type="entry name" value="GERMIN"/>
</dbReference>
<dbReference type="SMART" id="SM00835">
    <property type="entry name" value="Cupin_1"/>
    <property type="match status" value="1"/>
</dbReference>
<dbReference type="SUPFAM" id="SSF51182">
    <property type="entry name" value="RmlC-like cupins"/>
    <property type="match status" value="1"/>
</dbReference>
<reference key="1">
    <citation type="journal article" date="2005" name="Nature">
        <title>The map-based sequence of the rice genome.</title>
        <authorList>
            <consortium name="International rice genome sequencing project (IRGSP)"/>
        </authorList>
    </citation>
    <scope>NUCLEOTIDE SEQUENCE [LARGE SCALE GENOMIC DNA]</scope>
    <source>
        <strain>cv. Nipponbare</strain>
    </source>
</reference>
<reference key="2">
    <citation type="journal article" date="2008" name="Nucleic Acids Res.">
        <title>The rice annotation project database (RAP-DB): 2008 update.</title>
        <authorList>
            <consortium name="The rice annotation project (RAP)"/>
        </authorList>
    </citation>
    <scope>GENOME REANNOTATION</scope>
    <source>
        <strain>cv. Nipponbare</strain>
    </source>
</reference>
<reference key="3">
    <citation type="journal article" date="2013" name="Rice">
        <title>Improvement of the Oryza sativa Nipponbare reference genome using next generation sequence and optical map data.</title>
        <authorList>
            <person name="Kawahara Y."/>
            <person name="de la Bastide M."/>
            <person name="Hamilton J.P."/>
            <person name="Kanamori H."/>
            <person name="McCombie W.R."/>
            <person name="Ouyang S."/>
            <person name="Schwartz D.C."/>
            <person name="Tanaka T."/>
            <person name="Wu J."/>
            <person name="Zhou S."/>
            <person name="Childs K.L."/>
            <person name="Davidson R.M."/>
            <person name="Lin H."/>
            <person name="Quesada-Ocampo L."/>
            <person name="Vaillancourt B."/>
            <person name="Sakai H."/>
            <person name="Lee S.S."/>
            <person name="Kim J."/>
            <person name="Numa H."/>
            <person name="Itoh T."/>
            <person name="Buell C.R."/>
            <person name="Matsumoto T."/>
        </authorList>
    </citation>
    <scope>GENOME REANNOTATION</scope>
    <source>
        <strain>cv. Nipponbare</strain>
    </source>
</reference>
<reference key="4">
    <citation type="journal article" date="2005" name="PLoS Biol.">
        <title>The genomes of Oryza sativa: a history of duplications.</title>
        <authorList>
            <person name="Yu J."/>
            <person name="Wang J."/>
            <person name="Lin W."/>
            <person name="Li S."/>
            <person name="Li H."/>
            <person name="Zhou J."/>
            <person name="Ni P."/>
            <person name="Dong W."/>
            <person name="Hu S."/>
            <person name="Zeng C."/>
            <person name="Zhang J."/>
            <person name="Zhang Y."/>
            <person name="Li R."/>
            <person name="Xu Z."/>
            <person name="Li S."/>
            <person name="Li X."/>
            <person name="Zheng H."/>
            <person name="Cong L."/>
            <person name="Lin L."/>
            <person name="Yin J."/>
            <person name="Geng J."/>
            <person name="Li G."/>
            <person name="Shi J."/>
            <person name="Liu J."/>
            <person name="Lv H."/>
            <person name="Li J."/>
            <person name="Wang J."/>
            <person name="Deng Y."/>
            <person name="Ran L."/>
            <person name="Shi X."/>
            <person name="Wang X."/>
            <person name="Wu Q."/>
            <person name="Li C."/>
            <person name="Ren X."/>
            <person name="Wang J."/>
            <person name="Wang X."/>
            <person name="Li D."/>
            <person name="Liu D."/>
            <person name="Zhang X."/>
            <person name="Ji Z."/>
            <person name="Zhao W."/>
            <person name="Sun Y."/>
            <person name="Zhang Z."/>
            <person name="Bao J."/>
            <person name="Han Y."/>
            <person name="Dong L."/>
            <person name="Ji J."/>
            <person name="Chen P."/>
            <person name="Wu S."/>
            <person name="Liu J."/>
            <person name="Xiao Y."/>
            <person name="Bu D."/>
            <person name="Tan J."/>
            <person name="Yang L."/>
            <person name="Ye C."/>
            <person name="Zhang J."/>
            <person name="Xu J."/>
            <person name="Zhou Y."/>
            <person name="Yu Y."/>
            <person name="Zhang B."/>
            <person name="Zhuang S."/>
            <person name="Wei H."/>
            <person name="Liu B."/>
            <person name="Lei M."/>
            <person name="Yu H."/>
            <person name="Li Y."/>
            <person name="Xu H."/>
            <person name="Wei S."/>
            <person name="He X."/>
            <person name="Fang L."/>
            <person name="Zhang Z."/>
            <person name="Zhang Y."/>
            <person name="Huang X."/>
            <person name="Su Z."/>
            <person name="Tong W."/>
            <person name="Li J."/>
            <person name="Tong Z."/>
            <person name="Li S."/>
            <person name="Ye J."/>
            <person name="Wang L."/>
            <person name="Fang L."/>
            <person name="Lei T."/>
            <person name="Chen C.-S."/>
            <person name="Chen H.-C."/>
            <person name="Xu Z."/>
            <person name="Li H."/>
            <person name="Huang H."/>
            <person name="Zhang F."/>
            <person name="Xu H."/>
            <person name="Li N."/>
            <person name="Zhao C."/>
            <person name="Li S."/>
            <person name="Dong L."/>
            <person name="Huang Y."/>
            <person name="Li L."/>
            <person name="Xi Y."/>
            <person name="Qi Q."/>
            <person name="Li W."/>
            <person name="Zhang B."/>
            <person name="Hu W."/>
            <person name="Zhang Y."/>
            <person name="Tian X."/>
            <person name="Jiao Y."/>
            <person name="Liang X."/>
            <person name="Jin J."/>
            <person name="Gao L."/>
            <person name="Zheng W."/>
            <person name="Hao B."/>
            <person name="Liu S.-M."/>
            <person name="Wang W."/>
            <person name="Yuan L."/>
            <person name="Cao M."/>
            <person name="McDermott J."/>
            <person name="Samudrala R."/>
            <person name="Wang J."/>
            <person name="Wong G.K.-S."/>
            <person name="Yang H."/>
        </authorList>
    </citation>
    <scope>NUCLEOTIDE SEQUENCE [LARGE SCALE GENOMIC DNA]</scope>
    <source>
        <strain>cv. Nipponbare</strain>
    </source>
</reference>
<reference key="5">
    <citation type="journal article" date="2003" name="Science">
        <title>Collection, mapping, and annotation of over 28,000 cDNA clones from japonica rice.</title>
        <authorList>
            <consortium name="The rice full-length cDNA consortium"/>
        </authorList>
    </citation>
    <scope>NUCLEOTIDE SEQUENCE [LARGE SCALE MRNA]</scope>
    <source>
        <strain>cv. Nipponbare</strain>
    </source>
</reference>
<organism>
    <name type="scientific">Oryza sativa subsp. japonica</name>
    <name type="common">Rice</name>
    <dbReference type="NCBI Taxonomy" id="39947"/>
    <lineage>
        <taxon>Eukaryota</taxon>
        <taxon>Viridiplantae</taxon>
        <taxon>Streptophyta</taxon>
        <taxon>Embryophyta</taxon>
        <taxon>Tracheophyta</taxon>
        <taxon>Spermatophyta</taxon>
        <taxon>Magnoliopsida</taxon>
        <taxon>Liliopsida</taxon>
        <taxon>Poales</taxon>
        <taxon>Poaceae</taxon>
        <taxon>BOP clade</taxon>
        <taxon>Oryzoideae</taxon>
        <taxon>Oryzeae</taxon>
        <taxon>Oryzinae</taxon>
        <taxon>Oryza</taxon>
        <taxon>Oryza sativa</taxon>
    </lineage>
</organism>
<gene>
    <name type="ordered locus">Os09g0568500</name>
    <name type="ordered locus">LOC_Os09g39510</name>
    <name type="ORF">OJ1003_C09.11</name>
    <name type="ORF">OsJ_029207</name>
</gene>